<accession>Q8CQ46</accession>
<evidence type="ECO:0000250" key="1"/>
<evidence type="ECO:0000255" key="2"/>
<evidence type="ECO:0000305" key="3"/>
<comment type="subunit">
    <text evidence="1">May form a heterooligomeric complex that consists of seven subunits: mnhA2, mnhB2, mnhC2, mnhD2, mnhE2, mnhF2 and mnhG2.</text>
</comment>
<comment type="subcellular location">
    <subcellularLocation>
        <location evidence="3">Cell membrane</location>
        <topology evidence="3">Multi-pass membrane protein</topology>
    </subcellularLocation>
</comment>
<comment type="similarity">
    <text evidence="3">Belongs to the CPA3 antiporters (TC 2.A.63) subunit E family.</text>
</comment>
<organism>
    <name type="scientific">Staphylococcus epidermidis (strain ATCC 12228 / FDA PCI 1200)</name>
    <dbReference type="NCBI Taxonomy" id="176280"/>
    <lineage>
        <taxon>Bacteria</taxon>
        <taxon>Bacillati</taxon>
        <taxon>Bacillota</taxon>
        <taxon>Bacilli</taxon>
        <taxon>Bacillales</taxon>
        <taxon>Staphylococcaceae</taxon>
        <taxon>Staphylococcus</taxon>
    </lineage>
</organism>
<feature type="chain" id="PRO_0000372224" description="Putative antiporter subunit mnhE2">
    <location>
        <begin position="1"/>
        <end position="160"/>
    </location>
</feature>
<feature type="transmembrane region" description="Helical" evidence="2">
    <location>
        <begin position="23"/>
        <end position="43"/>
    </location>
</feature>
<feature type="transmembrane region" description="Helical" evidence="2">
    <location>
        <begin position="55"/>
        <end position="75"/>
    </location>
</feature>
<feature type="transmembrane region" description="Helical" evidence="2">
    <location>
        <begin position="100"/>
        <end position="120"/>
    </location>
</feature>
<reference key="1">
    <citation type="journal article" date="2003" name="Mol. Microbiol.">
        <title>Genome-based analysis of virulence genes in a non-biofilm-forming Staphylococcus epidermidis strain (ATCC 12228).</title>
        <authorList>
            <person name="Zhang Y.-Q."/>
            <person name="Ren S.-X."/>
            <person name="Li H.-L."/>
            <person name="Wang Y.-X."/>
            <person name="Fu G."/>
            <person name="Yang J."/>
            <person name="Qin Z.-Q."/>
            <person name="Miao Y.-G."/>
            <person name="Wang W.-Y."/>
            <person name="Chen R.-S."/>
            <person name="Shen Y."/>
            <person name="Chen Z."/>
            <person name="Yuan Z.-H."/>
            <person name="Zhao G.-P."/>
            <person name="Qu D."/>
            <person name="Danchin A."/>
            <person name="Wen Y.-M."/>
        </authorList>
    </citation>
    <scope>NUCLEOTIDE SEQUENCE [LARGE SCALE GENOMIC DNA]</scope>
    <source>
        <strain>ATCC 12228 / FDA PCI 1200</strain>
    </source>
</reference>
<sequence length="160" mass="18735">MKQVVLNIVIAFLWVLFQDEDEFKFTTFFAGFLIGLIVIYILHRFFGEEFYLKKIWVAIKFLAVYLYQLITSSISTINYILFKTNEVNPGLLTYETSLKSNWAITFLTILIIITPGSTVIRISKNTNKFFIHSIDVSEKDKENLLKSIKQYEDLILEVTR</sequence>
<protein>
    <recommendedName>
        <fullName>Putative antiporter subunit mnhE2</fullName>
    </recommendedName>
    <alternativeName>
        <fullName>Mrp complex subunit E2</fullName>
    </alternativeName>
    <alternativeName>
        <fullName>Putative NADH-ubiquinone oxidoreductase subunit mnhE2</fullName>
    </alternativeName>
</protein>
<keyword id="KW-0050">Antiport</keyword>
<keyword id="KW-1003">Cell membrane</keyword>
<keyword id="KW-0406">Ion transport</keyword>
<keyword id="KW-0472">Membrane</keyword>
<keyword id="KW-0812">Transmembrane</keyword>
<keyword id="KW-1133">Transmembrane helix</keyword>
<keyword id="KW-0813">Transport</keyword>
<dbReference type="EMBL" id="AE015929">
    <property type="protein sequence ID" value="AAO03998.1"/>
    <property type="molecule type" value="Genomic_DNA"/>
</dbReference>
<dbReference type="RefSeq" id="NP_763956.1">
    <property type="nucleotide sequence ID" value="NC_004461.1"/>
</dbReference>
<dbReference type="RefSeq" id="WP_001832121.1">
    <property type="nucleotide sequence ID" value="NZ_WBME01000020.1"/>
</dbReference>
<dbReference type="SMR" id="Q8CQ46"/>
<dbReference type="GeneID" id="50019442"/>
<dbReference type="KEGG" id="sep:SE_0401"/>
<dbReference type="PATRIC" id="fig|176280.10.peg.375"/>
<dbReference type="eggNOG" id="COG1863">
    <property type="taxonomic scope" value="Bacteria"/>
</dbReference>
<dbReference type="HOGENOM" id="CLU_086615_3_2_9"/>
<dbReference type="OrthoDB" id="9800498at2"/>
<dbReference type="Proteomes" id="UP000001411">
    <property type="component" value="Chromosome"/>
</dbReference>
<dbReference type="GO" id="GO:0005886">
    <property type="term" value="C:plasma membrane"/>
    <property type="evidence" value="ECO:0007669"/>
    <property type="project" value="UniProtKB-SubCell"/>
</dbReference>
<dbReference type="GO" id="GO:0015297">
    <property type="term" value="F:antiporter activity"/>
    <property type="evidence" value="ECO:0007669"/>
    <property type="project" value="UniProtKB-KW"/>
</dbReference>
<dbReference type="GO" id="GO:0008324">
    <property type="term" value="F:monoatomic cation transmembrane transporter activity"/>
    <property type="evidence" value="ECO:0007669"/>
    <property type="project" value="InterPro"/>
</dbReference>
<dbReference type="InterPro" id="IPR002758">
    <property type="entry name" value="Cation_antiport_E"/>
</dbReference>
<dbReference type="NCBIfam" id="NF006517">
    <property type="entry name" value="PRK08965.1-1"/>
    <property type="match status" value="1"/>
</dbReference>
<dbReference type="PANTHER" id="PTHR34584">
    <property type="entry name" value="NA(+)/H(+) ANTIPORTER SUBUNIT E1"/>
    <property type="match status" value="1"/>
</dbReference>
<dbReference type="PANTHER" id="PTHR34584:SF1">
    <property type="entry name" value="NA(+)_H(+) ANTIPORTER SUBUNIT E1"/>
    <property type="match status" value="1"/>
</dbReference>
<dbReference type="Pfam" id="PF01899">
    <property type="entry name" value="MNHE"/>
    <property type="match status" value="1"/>
</dbReference>
<dbReference type="PIRSF" id="PIRSF019239">
    <property type="entry name" value="MrpE"/>
    <property type="match status" value="1"/>
</dbReference>
<name>MNHE2_STAES</name>
<gene>
    <name type="primary">mnhE2</name>
    <name type="synonym">mrpE2</name>
    <name type="ordered locus">SE_0401</name>
</gene>
<proteinExistence type="inferred from homology"/>